<dbReference type="EC" id="6.1.1.17" evidence="1"/>
<dbReference type="EMBL" id="CP000946">
    <property type="protein sequence ID" value="ACA76938.1"/>
    <property type="molecule type" value="Genomic_DNA"/>
</dbReference>
<dbReference type="RefSeq" id="WP_000695668.1">
    <property type="nucleotide sequence ID" value="NC_010468.1"/>
</dbReference>
<dbReference type="SMR" id="B1IX65"/>
<dbReference type="KEGG" id="ecl:EcolC_1272"/>
<dbReference type="HOGENOM" id="CLU_015768_6_0_6"/>
<dbReference type="GO" id="GO:0005829">
    <property type="term" value="C:cytosol"/>
    <property type="evidence" value="ECO:0007669"/>
    <property type="project" value="TreeGrafter"/>
</dbReference>
<dbReference type="GO" id="GO:0005524">
    <property type="term" value="F:ATP binding"/>
    <property type="evidence" value="ECO:0007669"/>
    <property type="project" value="UniProtKB-UniRule"/>
</dbReference>
<dbReference type="GO" id="GO:0004818">
    <property type="term" value="F:glutamate-tRNA ligase activity"/>
    <property type="evidence" value="ECO:0007669"/>
    <property type="project" value="UniProtKB-UniRule"/>
</dbReference>
<dbReference type="GO" id="GO:0000049">
    <property type="term" value="F:tRNA binding"/>
    <property type="evidence" value="ECO:0007669"/>
    <property type="project" value="InterPro"/>
</dbReference>
<dbReference type="GO" id="GO:0008270">
    <property type="term" value="F:zinc ion binding"/>
    <property type="evidence" value="ECO:0007669"/>
    <property type="project" value="UniProtKB-UniRule"/>
</dbReference>
<dbReference type="GO" id="GO:0006424">
    <property type="term" value="P:glutamyl-tRNA aminoacylation"/>
    <property type="evidence" value="ECO:0007669"/>
    <property type="project" value="UniProtKB-UniRule"/>
</dbReference>
<dbReference type="CDD" id="cd00808">
    <property type="entry name" value="GluRS_core"/>
    <property type="match status" value="1"/>
</dbReference>
<dbReference type="FunFam" id="1.10.10.350:FF:000001">
    <property type="entry name" value="Glutamate--tRNA ligase"/>
    <property type="match status" value="1"/>
</dbReference>
<dbReference type="FunFam" id="3.40.50.620:FF:000007">
    <property type="entry name" value="Glutamate--tRNA ligase"/>
    <property type="match status" value="1"/>
</dbReference>
<dbReference type="Gene3D" id="1.10.10.350">
    <property type="match status" value="1"/>
</dbReference>
<dbReference type="Gene3D" id="3.40.50.620">
    <property type="entry name" value="HUPs"/>
    <property type="match status" value="1"/>
</dbReference>
<dbReference type="HAMAP" id="MF_00022">
    <property type="entry name" value="Glu_tRNA_synth_type1"/>
    <property type="match status" value="1"/>
</dbReference>
<dbReference type="InterPro" id="IPR045462">
    <property type="entry name" value="aa-tRNA-synth_I_cd-bd"/>
</dbReference>
<dbReference type="InterPro" id="IPR020751">
    <property type="entry name" value="aa-tRNA-synth_I_codon-bd_sub2"/>
</dbReference>
<dbReference type="InterPro" id="IPR001412">
    <property type="entry name" value="aa-tRNA-synth_I_CS"/>
</dbReference>
<dbReference type="InterPro" id="IPR008925">
    <property type="entry name" value="aa_tRNA-synth_I_cd-bd_sf"/>
</dbReference>
<dbReference type="InterPro" id="IPR004527">
    <property type="entry name" value="Glu-tRNA-ligase_bac/mito"/>
</dbReference>
<dbReference type="InterPro" id="IPR000924">
    <property type="entry name" value="Glu/Gln-tRNA-synth"/>
</dbReference>
<dbReference type="InterPro" id="IPR020058">
    <property type="entry name" value="Glu/Gln-tRNA-synth_Ib_cat-dom"/>
</dbReference>
<dbReference type="InterPro" id="IPR049940">
    <property type="entry name" value="GluQ/Sye"/>
</dbReference>
<dbReference type="InterPro" id="IPR033910">
    <property type="entry name" value="GluRS_core"/>
</dbReference>
<dbReference type="InterPro" id="IPR014729">
    <property type="entry name" value="Rossmann-like_a/b/a_fold"/>
</dbReference>
<dbReference type="NCBIfam" id="TIGR00464">
    <property type="entry name" value="gltX_bact"/>
    <property type="match status" value="1"/>
</dbReference>
<dbReference type="PANTHER" id="PTHR43311">
    <property type="entry name" value="GLUTAMATE--TRNA LIGASE"/>
    <property type="match status" value="1"/>
</dbReference>
<dbReference type="PANTHER" id="PTHR43311:SF2">
    <property type="entry name" value="GLUTAMATE--TRNA LIGASE, MITOCHONDRIAL-RELATED"/>
    <property type="match status" value="1"/>
</dbReference>
<dbReference type="Pfam" id="PF19269">
    <property type="entry name" value="Anticodon_2"/>
    <property type="match status" value="1"/>
</dbReference>
<dbReference type="Pfam" id="PF00749">
    <property type="entry name" value="tRNA-synt_1c"/>
    <property type="match status" value="1"/>
</dbReference>
<dbReference type="PRINTS" id="PR00987">
    <property type="entry name" value="TRNASYNTHGLU"/>
</dbReference>
<dbReference type="SUPFAM" id="SSF48163">
    <property type="entry name" value="An anticodon-binding domain of class I aminoacyl-tRNA synthetases"/>
    <property type="match status" value="1"/>
</dbReference>
<dbReference type="SUPFAM" id="SSF52374">
    <property type="entry name" value="Nucleotidylyl transferase"/>
    <property type="match status" value="1"/>
</dbReference>
<dbReference type="PROSITE" id="PS00178">
    <property type="entry name" value="AA_TRNA_LIGASE_I"/>
    <property type="match status" value="1"/>
</dbReference>
<accession>B1IX65</accession>
<comment type="function">
    <text evidence="1">Catalyzes the attachment of glutamate to tRNA(Glu) in a two-step reaction: glutamate is first activated by ATP to form Glu-AMP and then transferred to the acceptor end of tRNA(Glu).</text>
</comment>
<comment type="catalytic activity">
    <reaction evidence="1">
        <text>tRNA(Glu) + L-glutamate + ATP = L-glutamyl-tRNA(Glu) + AMP + diphosphate</text>
        <dbReference type="Rhea" id="RHEA:23540"/>
        <dbReference type="Rhea" id="RHEA-COMP:9663"/>
        <dbReference type="Rhea" id="RHEA-COMP:9680"/>
        <dbReference type="ChEBI" id="CHEBI:29985"/>
        <dbReference type="ChEBI" id="CHEBI:30616"/>
        <dbReference type="ChEBI" id="CHEBI:33019"/>
        <dbReference type="ChEBI" id="CHEBI:78442"/>
        <dbReference type="ChEBI" id="CHEBI:78520"/>
        <dbReference type="ChEBI" id="CHEBI:456215"/>
        <dbReference type="EC" id="6.1.1.17"/>
    </reaction>
</comment>
<comment type="cofactor">
    <cofactor evidence="1">
        <name>Zn(2+)</name>
        <dbReference type="ChEBI" id="CHEBI:29105"/>
    </cofactor>
    <text evidence="1">Binds 1 zinc ion per subunit.</text>
</comment>
<comment type="subunit">
    <text evidence="1">Monomer.</text>
</comment>
<comment type="subcellular location">
    <subcellularLocation>
        <location evidence="1">Cytoplasm</location>
    </subcellularLocation>
</comment>
<comment type="similarity">
    <text evidence="1">Belongs to the class-I aminoacyl-tRNA synthetase family. Glutamate--tRNA ligase type 1 subfamily.</text>
</comment>
<feature type="chain" id="PRO_1000074320" description="Glutamate--tRNA ligase">
    <location>
        <begin position="1"/>
        <end position="471"/>
    </location>
</feature>
<feature type="short sequence motif" description="'HIGH' region" evidence="1">
    <location>
        <begin position="9"/>
        <end position="19"/>
    </location>
</feature>
<feature type="short sequence motif" description="'KMSKS' region" evidence="1">
    <location>
        <begin position="237"/>
        <end position="241"/>
    </location>
</feature>
<feature type="binding site" evidence="1">
    <location>
        <position position="98"/>
    </location>
    <ligand>
        <name>Zn(2+)</name>
        <dbReference type="ChEBI" id="CHEBI:29105"/>
    </ligand>
</feature>
<feature type="binding site" evidence="1">
    <location>
        <position position="100"/>
    </location>
    <ligand>
        <name>Zn(2+)</name>
        <dbReference type="ChEBI" id="CHEBI:29105"/>
    </ligand>
</feature>
<feature type="binding site" evidence="1">
    <location>
        <position position="125"/>
    </location>
    <ligand>
        <name>Zn(2+)</name>
        <dbReference type="ChEBI" id="CHEBI:29105"/>
    </ligand>
</feature>
<feature type="binding site" evidence="1">
    <location>
        <position position="127"/>
    </location>
    <ligand>
        <name>Zn(2+)</name>
        <dbReference type="ChEBI" id="CHEBI:29105"/>
    </ligand>
</feature>
<feature type="binding site" evidence="1">
    <location>
        <position position="240"/>
    </location>
    <ligand>
        <name>ATP</name>
        <dbReference type="ChEBI" id="CHEBI:30616"/>
    </ligand>
</feature>
<proteinExistence type="inferred from homology"/>
<sequence length="471" mass="53832">MKIKTRFAPSPTGYLHVGGARTALYSWLFARNHGGEFVLRIEDTDLERSTPEAIEAIMDGMNWLSLEWDEGPYYQTKRFDRYNAVIDQMLEEGTAYKCYCSKERLEALREEQMAKGEKPRYDGRCRHSHEHHADDEPCVVRFANPQEGSVVFDDQIRGPIEFSNQELDDLIIRRTDGSPTYNFCVVVDDWDMEITHVIRGEDHINNTPRQINILKALKAPVPVYAHVSMINGDDGKKLSKRHGAVSVMQYRDDGYLPEALLNYLVRLGWSHGDQEIFTREEMIKYFTLNAVSKSASAFNTDKLLWLNHHYINALPPEYVATHLQWHIEQENIDTRNGPQLADLVKLLGERCKTLKEMSQSCRYFYEDFAEFDADAAKKHLRPVARQPLEVVRDKLAAITDWTAENVHHAIQATADELEVGMGKVGMPLRVAVTGAGQSPALDVTVHAIGKTRSIERINKALDFIAERENQQ</sequence>
<keyword id="KW-0030">Aminoacyl-tRNA synthetase</keyword>
<keyword id="KW-0067">ATP-binding</keyword>
<keyword id="KW-0963">Cytoplasm</keyword>
<keyword id="KW-0436">Ligase</keyword>
<keyword id="KW-0479">Metal-binding</keyword>
<keyword id="KW-0547">Nucleotide-binding</keyword>
<keyword id="KW-0648">Protein biosynthesis</keyword>
<keyword id="KW-0862">Zinc</keyword>
<name>SYE_ECOLC</name>
<organism>
    <name type="scientific">Escherichia coli (strain ATCC 8739 / DSM 1576 / NBRC 3972 / NCIMB 8545 / WDCM 00012 / Crooks)</name>
    <dbReference type="NCBI Taxonomy" id="481805"/>
    <lineage>
        <taxon>Bacteria</taxon>
        <taxon>Pseudomonadati</taxon>
        <taxon>Pseudomonadota</taxon>
        <taxon>Gammaproteobacteria</taxon>
        <taxon>Enterobacterales</taxon>
        <taxon>Enterobacteriaceae</taxon>
        <taxon>Escherichia</taxon>
    </lineage>
</organism>
<reference key="1">
    <citation type="submission" date="2008-02" db="EMBL/GenBank/DDBJ databases">
        <title>Complete sequence of Escherichia coli C str. ATCC 8739.</title>
        <authorList>
            <person name="Copeland A."/>
            <person name="Lucas S."/>
            <person name="Lapidus A."/>
            <person name="Glavina del Rio T."/>
            <person name="Dalin E."/>
            <person name="Tice H."/>
            <person name="Bruce D."/>
            <person name="Goodwin L."/>
            <person name="Pitluck S."/>
            <person name="Kiss H."/>
            <person name="Brettin T."/>
            <person name="Detter J.C."/>
            <person name="Han C."/>
            <person name="Kuske C.R."/>
            <person name="Schmutz J."/>
            <person name="Larimer F."/>
            <person name="Land M."/>
            <person name="Hauser L."/>
            <person name="Kyrpides N."/>
            <person name="Mikhailova N."/>
            <person name="Ingram L."/>
            <person name="Richardson P."/>
        </authorList>
    </citation>
    <scope>NUCLEOTIDE SEQUENCE [LARGE SCALE GENOMIC DNA]</scope>
    <source>
        <strain>ATCC 8739 / DSM 1576 / NBRC 3972 / NCIMB 8545 / WDCM 00012 / Crooks</strain>
    </source>
</reference>
<gene>
    <name evidence="1" type="primary">gltX</name>
    <name type="ordered locus">EcolC_1272</name>
</gene>
<protein>
    <recommendedName>
        <fullName evidence="1">Glutamate--tRNA ligase</fullName>
        <ecNumber evidence="1">6.1.1.17</ecNumber>
    </recommendedName>
    <alternativeName>
        <fullName evidence="1">Glutamyl-tRNA synthetase</fullName>
        <shortName evidence="1">GluRS</shortName>
    </alternativeName>
</protein>
<evidence type="ECO:0000255" key="1">
    <source>
        <dbReference type="HAMAP-Rule" id="MF_00022"/>
    </source>
</evidence>